<feature type="chain" id="PRO_0000314808" description="Protein zwilch">
    <location>
        <begin position="1"/>
        <end position="641"/>
    </location>
</feature>
<feature type="modified residue" description="Phosphoserine" evidence="3">
    <location>
        <position position="312"/>
    </location>
</feature>
<comment type="function">
    <text evidence="1 2 4">Essential component of the mitotic checkpoint, which prevents cells from prematurely exiting mitosis (PubMed:15886105, PubMed:17576797). Required for the assembly of the dynein-dynactin, Mad2 complexes and spindly/CG15415 onto kinetochores (PubMed:15886105, PubMed:17576797). Its function related to the spindle assembly machinery is proposed to depend on its association in the RZZ complex (PubMed:22685323). Failure to assemble the complex due to the absence of any one of its components, results in the incorrect redistribution of the remaining components to diverse membrane compartments (PubMed:22685323).</text>
</comment>
<comment type="subunit">
    <text evidence="1">Component of the RZZ complex composed of rod, Zw10 and Zwilch.</text>
</comment>
<comment type="subcellular location">
    <subcellularLocation>
        <location evidence="5">Cytoplasm</location>
    </subcellularLocation>
    <subcellularLocation>
        <location evidence="1 5">Chromosome</location>
        <location evidence="1 5">Centromere</location>
        <location evidence="1 5">Kinetochore</location>
    </subcellularLocation>
    <subcellularLocation>
        <location evidence="5">Cytoplasm</location>
        <location evidence="5">Cytoskeleton</location>
        <location evidence="5">Spindle</location>
    </subcellularLocation>
    <text evidence="1 5">Dynamic pattern of localization during the cell cycle (PubMed:22685323). In most cells at interphase, present diffusely in the cytoplasm (PubMed:22685323). At metaphase, detected at the kinetochores and kinetochore microtubules, and in late anaphase and telophase accumulates at the spindle envelope midzone (PubMed:12686595, PubMed:22685323).</text>
</comment>
<comment type="disruption phenotype">
    <text evidence="1 5">Lagging chromosomes at anaphase and precocious sister chromatid separation upon activation of the spindle checkpoint (PubMed:12686595). In spermatocytes the number of Golgi structures are not affected but they show a mild defect in shape (PubMed:22685323).</text>
</comment>
<comment type="similarity">
    <text evidence="6">Belongs to the ZWILCH family.</text>
</comment>
<comment type="sequence caution" evidence="6">
    <conflict type="erroneous initiation">
        <sequence resource="EMBL-CDS" id="AAL13732"/>
    </conflict>
</comment>
<reference key="1">
    <citation type="journal article" date="2000" name="Science">
        <title>The genome sequence of Drosophila melanogaster.</title>
        <authorList>
            <person name="Adams M.D."/>
            <person name="Celniker S.E."/>
            <person name="Holt R.A."/>
            <person name="Evans C.A."/>
            <person name="Gocayne J.D."/>
            <person name="Amanatides P.G."/>
            <person name="Scherer S.E."/>
            <person name="Li P.W."/>
            <person name="Hoskins R.A."/>
            <person name="Galle R.F."/>
            <person name="George R.A."/>
            <person name="Lewis S.E."/>
            <person name="Richards S."/>
            <person name="Ashburner M."/>
            <person name="Henderson S.N."/>
            <person name="Sutton G.G."/>
            <person name="Wortman J.R."/>
            <person name="Yandell M.D."/>
            <person name="Zhang Q."/>
            <person name="Chen L.X."/>
            <person name="Brandon R.C."/>
            <person name="Rogers Y.-H.C."/>
            <person name="Blazej R.G."/>
            <person name="Champe M."/>
            <person name="Pfeiffer B.D."/>
            <person name="Wan K.H."/>
            <person name="Doyle C."/>
            <person name="Baxter E.G."/>
            <person name="Helt G."/>
            <person name="Nelson C.R."/>
            <person name="Miklos G.L.G."/>
            <person name="Abril J.F."/>
            <person name="Agbayani A."/>
            <person name="An H.-J."/>
            <person name="Andrews-Pfannkoch C."/>
            <person name="Baldwin D."/>
            <person name="Ballew R.M."/>
            <person name="Basu A."/>
            <person name="Baxendale J."/>
            <person name="Bayraktaroglu L."/>
            <person name="Beasley E.M."/>
            <person name="Beeson K.Y."/>
            <person name="Benos P.V."/>
            <person name="Berman B.P."/>
            <person name="Bhandari D."/>
            <person name="Bolshakov S."/>
            <person name="Borkova D."/>
            <person name="Botchan M.R."/>
            <person name="Bouck J."/>
            <person name="Brokstein P."/>
            <person name="Brottier P."/>
            <person name="Burtis K.C."/>
            <person name="Busam D.A."/>
            <person name="Butler H."/>
            <person name="Cadieu E."/>
            <person name="Center A."/>
            <person name="Chandra I."/>
            <person name="Cherry J.M."/>
            <person name="Cawley S."/>
            <person name="Dahlke C."/>
            <person name="Davenport L.B."/>
            <person name="Davies P."/>
            <person name="de Pablos B."/>
            <person name="Delcher A."/>
            <person name="Deng Z."/>
            <person name="Mays A.D."/>
            <person name="Dew I."/>
            <person name="Dietz S.M."/>
            <person name="Dodson K."/>
            <person name="Doup L.E."/>
            <person name="Downes M."/>
            <person name="Dugan-Rocha S."/>
            <person name="Dunkov B.C."/>
            <person name="Dunn P."/>
            <person name="Durbin K.J."/>
            <person name="Evangelista C.C."/>
            <person name="Ferraz C."/>
            <person name="Ferriera S."/>
            <person name="Fleischmann W."/>
            <person name="Fosler C."/>
            <person name="Gabrielian A.E."/>
            <person name="Garg N.S."/>
            <person name="Gelbart W.M."/>
            <person name="Glasser K."/>
            <person name="Glodek A."/>
            <person name="Gong F."/>
            <person name="Gorrell J.H."/>
            <person name="Gu Z."/>
            <person name="Guan P."/>
            <person name="Harris M."/>
            <person name="Harris N.L."/>
            <person name="Harvey D.A."/>
            <person name="Heiman T.J."/>
            <person name="Hernandez J.R."/>
            <person name="Houck J."/>
            <person name="Hostin D."/>
            <person name="Houston K.A."/>
            <person name="Howland T.J."/>
            <person name="Wei M.-H."/>
            <person name="Ibegwam C."/>
            <person name="Jalali M."/>
            <person name="Kalush F."/>
            <person name="Karpen G.H."/>
            <person name="Ke Z."/>
            <person name="Kennison J.A."/>
            <person name="Ketchum K.A."/>
            <person name="Kimmel B.E."/>
            <person name="Kodira C.D."/>
            <person name="Kraft C.L."/>
            <person name="Kravitz S."/>
            <person name="Kulp D."/>
            <person name="Lai Z."/>
            <person name="Lasko P."/>
            <person name="Lei Y."/>
            <person name="Levitsky A.A."/>
            <person name="Li J.H."/>
            <person name="Li Z."/>
            <person name="Liang Y."/>
            <person name="Lin X."/>
            <person name="Liu X."/>
            <person name="Mattei B."/>
            <person name="McIntosh T.C."/>
            <person name="McLeod M.P."/>
            <person name="McPherson D."/>
            <person name="Merkulov G."/>
            <person name="Milshina N.V."/>
            <person name="Mobarry C."/>
            <person name="Morris J."/>
            <person name="Moshrefi A."/>
            <person name="Mount S.M."/>
            <person name="Moy M."/>
            <person name="Murphy B."/>
            <person name="Murphy L."/>
            <person name="Muzny D.M."/>
            <person name="Nelson D.L."/>
            <person name="Nelson D.R."/>
            <person name="Nelson K.A."/>
            <person name="Nixon K."/>
            <person name="Nusskern D.R."/>
            <person name="Pacleb J.M."/>
            <person name="Palazzolo M."/>
            <person name="Pittman G.S."/>
            <person name="Pan S."/>
            <person name="Pollard J."/>
            <person name="Puri V."/>
            <person name="Reese M.G."/>
            <person name="Reinert K."/>
            <person name="Remington K."/>
            <person name="Saunders R.D.C."/>
            <person name="Scheeler F."/>
            <person name="Shen H."/>
            <person name="Shue B.C."/>
            <person name="Siden-Kiamos I."/>
            <person name="Simpson M."/>
            <person name="Skupski M.P."/>
            <person name="Smith T.J."/>
            <person name="Spier E."/>
            <person name="Spradling A.C."/>
            <person name="Stapleton M."/>
            <person name="Strong R."/>
            <person name="Sun E."/>
            <person name="Svirskas R."/>
            <person name="Tector C."/>
            <person name="Turner R."/>
            <person name="Venter E."/>
            <person name="Wang A.H."/>
            <person name="Wang X."/>
            <person name="Wang Z.-Y."/>
            <person name="Wassarman D.A."/>
            <person name="Weinstock G.M."/>
            <person name="Weissenbach J."/>
            <person name="Williams S.M."/>
            <person name="Woodage T."/>
            <person name="Worley K.C."/>
            <person name="Wu D."/>
            <person name="Yang S."/>
            <person name="Yao Q.A."/>
            <person name="Ye J."/>
            <person name="Yeh R.-F."/>
            <person name="Zaveri J.S."/>
            <person name="Zhan M."/>
            <person name="Zhang G."/>
            <person name="Zhao Q."/>
            <person name="Zheng L."/>
            <person name="Zheng X.H."/>
            <person name="Zhong F.N."/>
            <person name="Zhong W."/>
            <person name="Zhou X."/>
            <person name="Zhu S.C."/>
            <person name="Zhu X."/>
            <person name="Smith H.O."/>
            <person name="Gibbs R.A."/>
            <person name="Myers E.W."/>
            <person name="Rubin G.M."/>
            <person name="Venter J.C."/>
        </authorList>
    </citation>
    <scope>NUCLEOTIDE SEQUENCE [LARGE SCALE GENOMIC DNA]</scope>
    <source>
        <strain>Berkeley</strain>
    </source>
</reference>
<reference key="2">
    <citation type="journal article" date="2002" name="Genome Biol.">
        <title>Annotation of the Drosophila melanogaster euchromatic genome: a systematic review.</title>
        <authorList>
            <person name="Misra S."/>
            <person name="Crosby M.A."/>
            <person name="Mungall C.J."/>
            <person name="Matthews B.B."/>
            <person name="Campbell K.S."/>
            <person name="Hradecky P."/>
            <person name="Huang Y."/>
            <person name="Kaminker J.S."/>
            <person name="Millburn G.H."/>
            <person name="Prochnik S.E."/>
            <person name="Smith C.D."/>
            <person name="Tupy J.L."/>
            <person name="Whitfield E.J."/>
            <person name="Bayraktaroglu L."/>
            <person name="Berman B.P."/>
            <person name="Bettencourt B.R."/>
            <person name="Celniker S.E."/>
            <person name="de Grey A.D.N.J."/>
            <person name="Drysdale R.A."/>
            <person name="Harris N.L."/>
            <person name="Richter J."/>
            <person name="Russo S."/>
            <person name="Schroeder A.J."/>
            <person name="Shu S.Q."/>
            <person name="Stapleton M."/>
            <person name="Yamada C."/>
            <person name="Ashburner M."/>
            <person name="Gelbart W.M."/>
            <person name="Rubin G.M."/>
            <person name="Lewis S.E."/>
        </authorList>
    </citation>
    <scope>GENOME REANNOTATION</scope>
    <source>
        <strain>Berkeley</strain>
    </source>
</reference>
<reference key="3">
    <citation type="journal article" date="2002" name="Genome Biol.">
        <title>A Drosophila full-length cDNA resource.</title>
        <authorList>
            <person name="Stapleton M."/>
            <person name="Carlson J.W."/>
            <person name="Brokstein P."/>
            <person name="Yu C."/>
            <person name="Champe M."/>
            <person name="George R.A."/>
            <person name="Guarin H."/>
            <person name="Kronmiller B."/>
            <person name="Pacleb J.M."/>
            <person name="Park S."/>
            <person name="Wan K.H."/>
            <person name="Rubin G.M."/>
            <person name="Celniker S.E."/>
        </authorList>
    </citation>
    <scope>NUCLEOTIDE SEQUENCE [LARGE SCALE MRNA] OF 6-641</scope>
    <source>
        <strain>Berkeley</strain>
        <tissue>Embryo</tissue>
    </source>
</reference>
<reference key="4">
    <citation type="journal article" date="2003" name="Mol. Biol. Cell">
        <title>Zwilch, a new component of the ZW10/ROD complex required for kinetochore functions.</title>
        <authorList>
            <person name="Williams B.C."/>
            <person name="Li Z."/>
            <person name="Liu S."/>
            <person name="Williams E.V."/>
            <person name="Leung G."/>
            <person name="Yen T.J."/>
            <person name="Goldberg M.L."/>
        </authorList>
    </citation>
    <scope>FUNCTION</scope>
    <scope>IDENTIFICATION BY MASS SPECTROMETRY</scope>
    <scope>IDENTIFICATION IN THE RZZ COMPLEX</scope>
    <scope>SUBCELLULAR LOCATION</scope>
    <scope>DISRUPTION PHENOTYPE</scope>
</reference>
<reference key="5">
    <citation type="journal article" date="2005" name="Curr. Biol.">
        <title>Recruitment of Mad2 to the kinetochore requires the Rod/Zw10 complex.</title>
        <authorList>
            <person name="Buffin E."/>
            <person name="Lefebvre C."/>
            <person name="Huang J."/>
            <person name="Gagou M.E."/>
            <person name="Karess R.E."/>
        </authorList>
    </citation>
    <scope>FUNCTION</scope>
</reference>
<reference key="6">
    <citation type="journal article" date="2007" name="J. Cell Biol.">
        <title>Spindly, a novel protein essential for silencing the spindle assembly checkpoint, recruits dynein to the kinetochore.</title>
        <authorList>
            <person name="Griffis E.R."/>
            <person name="Stuurman N."/>
            <person name="Vale R.D."/>
        </authorList>
    </citation>
    <scope>FUNCTION</scope>
</reference>
<reference key="7">
    <citation type="journal article" date="2007" name="Mol. Biosyst.">
        <title>An integrated chemical, mass spectrometric and computational strategy for (quantitative) phosphoproteomics: application to Drosophila melanogaster Kc167 cells.</title>
        <authorList>
            <person name="Bodenmiller B."/>
            <person name="Mueller L.N."/>
            <person name="Pedrioli P.G.A."/>
            <person name="Pflieger D."/>
            <person name="Juenger M.A."/>
            <person name="Eng J.K."/>
            <person name="Aebersold R."/>
            <person name="Tao W.A."/>
        </authorList>
    </citation>
    <scope>PHOSPHORYLATION [LARGE SCALE ANALYSIS] AT SER-312</scope>
    <scope>IDENTIFICATION BY MASS SPECTROMETRY</scope>
</reference>
<reference key="8">
    <citation type="journal article" date="2012" name="J. Cell Sci.">
        <title>The Drosophila RZZ complex - roles in membrane trafficking and cytokinesis.</title>
        <authorList>
            <person name="Wainman A."/>
            <person name="Giansanti M.G."/>
            <person name="Goldberg M.L."/>
            <person name="Gatti M."/>
        </authorList>
    </citation>
    <scope>FUNCTION</scope>
    <scope>SUBCELLULAR LOCATION</scope>
    <scope>DISRUPTION PHENOTYPE</scope>
</reference>
<name>ZWILC_DROME</name>
<dbReference type="EMBL" id="AE014297">
    <property type="protein sequence ID" value="AAF57128.1"/>
    <property type="molecule type" value="Genomic_DNA"/>
</dbReference>
<dbReference type="EMBL" id="AY058503">
    <property type="protein sequence ID" value="AAL13732.1"/>
    <property type="status" value="ALT_INIT"/>
    <property type="molecule type" value="mRNA"/>
</dbReference>
<dbReference type="RefSeq" id="NP_733421.1">
    <property type="nucleotide sequence ID" value="NM_170542.2"/>
</dbReference>
<dbReference type="BioGRID" id="72854">
    <property type="interactions" value="7"/>
</dbReference>
<dbReference type="ComplexPortal" id="CPX-2633">
    <property type="entry name" value="RZZ complex"/>
</dbReference>
<dbReference type="FunCoup" id="Q9VA00">
    <property type="interactions" value="68"/>
</dbReference>
<dbReference type="IntAct" id="Q9VA00">
    <property type="interactions" value="2"/>
</dbReference>
<dbReference type="STRING" id="7227.FBpp0085138"/>
<dbReference type="GlyGen" id="Q9VA00">
    <property type="glycosylation" value="1 site"/>
</dbReference>
<dbReference type="iPTMnet" id="Q9VA00"/>
<dbReference type="PaxDb" id="7227-FBpp0085138"/>
<dbReference type="EnsemblMetazoa" id="FBtr0085777">
    <property type="protein sequence ID" value="FBpp0085138"/>
    <property type="gene ID" value="FBgn0061476"/>
</dbReference>
<dbReference type="GeneID" id="59247"/>
<dbReference type="KEGG" id="dme:Dmel_CG18729"/>
<dbReference type="UCSC" id="CG18729-RA">
    <property type="organism name" value="d. melanogaster"/>
</dbReference>
<dbReference type="AGR" id="FB:FBgn0061476"/>
<dbReference type="CTD" id="55055"/>
<dbReference type="FlyBase" id="FBgn0061476">
    <property type="gene designation" value="Zwilch"/>
</dbReference>
<dbReference type="VEuPathDB" id="VectorBase:FBgn0061476"/>
<dbReference type="eggNOG" id="KOG4803">
    <property type="taxonomic scope" value="Eukaryota"/>
</dbReference>
<dbReference type="GeneTree" id="ENSGT00390000013696"/>
<dbReference type="HOGENOM" id="CLU_029219_0_0_1"/>
<dbReference type="InParanoid" id="Q9VA00"/>
<dbReference type="OMA" id="CAARCNI"/>
<dbReference type="OrthoDB" id="5556307at2759"/>
<dbReference type="PhylomeDB" id="Q9VA00"/>
<dbReference type="BioGRID-ORCS" id="59247">
    <property type="hits" value="0 hits in 1 CRISPR screen"/>
</dbReference>
<dbReference type="GenomeRNAi" id="59247"/>
<dbReference type="PRO" id="PR:Q9VA00"/>
<dbReference type="Proteomes" id="UP000000803">
    <property type="component" value="Chromosome 3R"/>
</dbReference>
<dbReference type="Bgee" id="FBgn0061476">
    <property type="expression patterns" value="Expressed in cleaving embryo and 22 other cell types or tissues"/>
</dbReference>
<dbReference type="ExpressionAtlas" id="Q9VA00">
    <property type="expression patterns" value="baseline and differential"/>
</dbReference>
<dbReference type="GO" id="GO:0005737">
    <property type="term" value="C:cytoplasm"/>
    <property type="evidence" value="ECO:0000314"/>
    <property type="project" value="FlyBase"/>
</dbReference>
<dbReference type="GO" id="GO:0000776">
    <property type="term" value="C:kinetochore"/>
    <property type="evidence" value="ECO:0000314"/>
    <property type="project" value="UniProtKB"/>
</dbReference>
<dbReference type="GO" id="GO:0005828">
    <property type="term" value="C:kinetochore microtubule"/>
    <property type="evidence" value="ECO:0000314"/>
    <property type="project" value="FlyBase"/>
</dbReference>
<dbReference type="GO" id="GO:1990423">
    <property type="term" value="C:RZZ complex"/>
    <property type="evidence" value="ECO:0000314"/>
    <property type="project" value="FlyBase"/>
</dbReference>
<dbReference type="GO" id="GO:0051233">
    <property type="term" value="C:spindle midzone"/>
    <property type="evidence" value="ECO:0000314"/>
    <property type="project" value="FlyBase"/>
</dbReference>
<dbReference type="GO" id="GO:0051301">
    <property type="term" value="P:cell division"/>
    <property type="evidence" value="ECO:0007669"/>
    <property type="project" value="UniProtKB-KW"/>
</dbReference>
<dbReference type="GO" id="GO:0007094">
    <property type="term" value="P:mitotic spindle assembly checkpoint signaling"/>
    <property type="evidence" value="ECO:0000315"/>
    <property type="project" value="FlyBase"/>
</dbReference>
<dbReference type="GO" id="GO:0034501">
    <property type="term" value="P:protein localization to kinetochore"/>
    <property type="evidence" value="ECO:0000318"/>
    <property type="project" value="GO_Central"/>
</dbReference>
<dbReference type="Gene3D" id="1.10.287.1880">
    <property type="match status" value="1"/>
</dbReference>
<dbReference type="Gene3D" id="1.20.58.730">
    <property type="match status" value="1"/>
</dbReference>
<dbReference type="InterPro" id="IPR018630">
    <property type="entry name" value="Zwilch"/>
</dbReference>
<dbReference type="PANTHER" id="PTHR15995">
    <property type="entry name" value="PROTEIN ZWILCH HOMOLOG"/>
    <property type="match status" value="1"/>
</dbReference>
<dbReference type="PANTHER" id="PTHR15995:SF1">
    <property type="entry name" value="PROTEIN ZWILCH HOMOLOG"/>
    <property type="match status" value="1"/>
</dbReference>
<dbReference type="Pfam" id="PF09817">
    <property type="entry name" value="Zwilch"/>
    <property type="match status" value="1"/>
</dbReference>
<accession>Q9VA00</accession>
<accession>Q95TU6</accession>
<keyword id="KW-0131">Cell cycle</keyword>
<keyword id="KW-0132">Cell division</keyword>
<keyword id="KW-0137">Centromere</keyword>
<keyword id="KW-0158">Chromosome</keyword>
<keyword id="KW-0963">Cytoplasm</keyword>
<keyword id="KW-0206">Cytoskeleton</keyword>
<keyword id="KW-0995">Kinetochore</keyword>
<keyword id="KW-0498">Mitosis</keyword>
<keyword id="KW-0597">Phosphoprotein</keyword>
<keyword id="KW-1185">Reference proteome</keyword>
<evidence type="ECO:0000269" key="1">
    <source>
    </source>
</evidence>
<evidence type="ECO:0000269" key="2">
    <source>
    </source>
</evidence>
<evidence type="ECO:0000269" key="3">
    <source>
    </source>
</evidence>
<evidence type="ECO:0000269" key="4">
    <source>
    </source>
</evidence>
<evidence type="ECO:0000269" key="5">
    <source>
    </source>
</evidence>
<evidence type="ECO:0000305" key="6"/>
<evidence type="ECO:0000312" key="7">
    <source>
        <dbReference type="FlyBase" id="FBgn0061476"/>
    </source>
</evidence>
<protein>
    <recommendedName>
        <fullName>Protein zwilch</fullName>
    </recommendedName>
</protein>
<gene>
    <name evidence="7" type="primary">Zwilch</name>
    <name evidence="7" type="ORF">CG18729</name>
</gene>
<proteinExistence type="evidence at protein level"/>
<organism>
    <name type="scientific">Drosophila melanogaster</name>
    <name type="common">Fruit fly</name>
    <dbReference type="NCBI Taxonomy" id="7227"/>
    <lineage>
        <taxon>Eukaryota</taxon>
        <taxon>Metazoa</taxon>
        <taxon>Ecdysozoa</taxon>
        <taxon>Arthropoda</taxon>
        <taxon>Hexapoda</taxon>
        <taxon>Insecta</taxon>
        <taxon>Pterygota</taxon>
        <taxon>Neoptera</taxon>
        <taxon>Endopterygota</taxon>
        <taxon>Diptera</taxon>
        <taxon>Brachycera</taxon>
        <taxon>Muscomorpha</taxon>
        <taxon>Ephydroidea</taxon>
        <taxon>Drosophilidae</taxon>
        <taxon>Drosophila</taxon>
        <taxon>Sophophora</taxon>
    </lineage>
</organism>
<sequence>MSASANLANVYAELMRRCGESYTITYGAPPTYLVSMVGAAEAGKKIVLVFKEDRNGAVARLRTTPTRAAPKKEGSADLDLTGSPLKDDCLVDAIADLSIDLQLDHSNPWKLEEEYQRGIPVDKARSIVCSEFLQLAEGLGSVWFLCDGSDLGQTQLLQYEFNPTHFSRGILSYQGVRPAYLVTSQALVRHHGKTPDETLIENSYQVNPHMRLRCSWTSSAALPLLVNLNDCDVALNHTFRVGDCGPLTQDFMNQLRILVYIREDIVSYHTDVKQGVSRDPTYRCGSGIDMDELRESINQTMTDVSGLIGRYSISNAEFDIEDVVQRAKVRQLTDLTDKLWELLKCCHSYKDLKIAFSMLFQCAARCNIVNTPTNKNRLAKIITELANRRLAMPCLSGAEPLELLLEIGLEKLYKDYEFIYTESKMCSTNLLKDDSSGASMDDGSPQNLPQLRKSLHNAVRGDPTPGAGMRKTLLHHHGAVNSRSTKYAGSDDDAGFKNSHFDEHESTERISKLFQIHCTLEHLLMMHIHLNLANVYNDVCSELLKKPPKLVESIDDQLSDVMDIRLSAHYVRDHLDGKDPYSRHITMRSHNKFRELKTTFYFNSENICPPNLAQCFQCDDKEMVKERTYHSWIYHKIRSLK</sequence>